<comment type="function">
    <text evidence="1">Binds 16S rRNA, required for the assembly of 30S particles and may also be responsible for determining the conformation of the 16S rRNA at the A site.</text>
</comment>
<comment type="subunit">
    <text evidence="1">Part of the 30S ribosomal subunit. Contacts proteins S3 and S10.</text>
</comment>
<comment type="similarity">
    <text evidence="1">Belongs to the universal ribosomal protein uS14 family.</text>
</comment>
<protein>
    <recommendedName>
        <fullName evidence="1">Small ribosomal subunit protein uS14</fullName>
    </recommendedName>
    <alternativeName>
        <fullName evidence="2">30S ribosomal protein S14</fullName>
    </alternativeName>
</protein>
<evidence type="ECO:0000255" key="1">
    <source>
        <dbReference type="HAMAP-Rule" id="MF_00537"/>
    </source>
</evidence>
<evidence type="ECO:0000305" key="2"/>
<organism>
    <name type="scientific">Stutzerimonas stutzeri (strain A1501)</name>
    <name type="common">Pseudomonas stutzeri</name>
    <dbReference type="NCBI Taxonomy" id="379731"/>
    <lineage>
        <taxon>Bacteria</taxon>
        <taxon>Pseudomonadati</taxon>
        <taxon>Pseudomonadota</taxon>
        <taxon>Gammaproteobacteria</taxon>
        <taxon>Pseudomonadales</taxon>
        <taxon>Pseudomonadaceae</taxon>
        <taxon>Stutzerimonas</taxon>
    </lineage>
</organism>
<keyword id="KW-1185">Reference proteome</keyword>
<keyword id="KW-0687">Ribonucleoprotein</keyword>
<keyword id="KW-0689">Ribosomal protein</keyword>
<keyword id="KW-0694">RNA-binding</keyword>
<keyword id="KW-0699">rRNA-binding</keyword>
<sequence length="101" mass="11456">MAKQSMKNRELKRQRTVAKFAQKRAALKAIIASPESTPEARWEAQVALQKQPRDASASRLRNRCRLTGRPHGVYRKFGLARNMLRQAAMRGDVPGLVKASW</sequence>
<name>RS14_STUS1</name>
<dbReference type="EMBL" id="CP000304">
    <property type="protein sequence ID" value="ABP78494.1"/>
    <property type="molecule type" value="Genomic_DNA"/>
</dbReference>
<dbReference type="RefSeq" id="WP_011911992.1">
    <property type="nucleotide sequence ID" value="NC_009434.1"/>
</dbReference>
<dbReference type="SMR" id="A4VHP3"/>
<dbReference type="GeneID" id="66819939"/>
<dbReference type="KEGG" id="psa:PST_0797"/>
<dbReference type="eggNOG" id="COG0199">
    <property type="taxonomic scope" value="Bacteria"/>
</dbReference>
<dbReference type="HOGENOM" id="CLU_139869_0_1_6"/>
<dbReference type="Proteomes" id="UP000000233">
    <property type="component" value="Chromosome"/>
</dbReference>
<dbReference type="GO" id="GO:0005737">
    <property type="term" value="C:cytoplasm"/>
    <property type="evidence" value="ECO:0007669"/>
    <property type="project" value="UniProtKB-ARBA"/>
</dbReference>
<dbReference type="GO" id="GO:0015935">
    <property type="term" value="C:small ribosomal subunit"/>
    <property type="evidence" value="ECO:0007669"/>
    <property type="project" value="TreeGrafter"/>
</dbReference>
<dbReference type="GO" id="GO:0019843">
    <property type="term" value="F:rRNA binding"/>
    <property type="evidence" value="ECO:0007669"/>
    <property type="project" value="UniProtKB-UniRule"/>
</dbReference>
<dbReference type="GO" id="GO:0003735">
    <property type="term" value="F:structural constituent of ribosome"/>
    <property type="evidence" value="ECO:0007669"/>
    <property type="project" value="InterPro"/>
</dbReference>
<dbReference type="GO" id="GO:0006412">
    <property type="term" value="P:translation"/>
    <property type="evidence" value="ECO:0007669"/>
    <property type="project" value="UniProtKB-UniRule"/>
</dbReference>
<dbReference type="FunFam" id="1.10.287.1480:FF:000001">
    <property type="entry name" value="30S ribosomal protein S14"/>
    <property type="match status" value="1"/>
</dbReference>
<dbReference type="Gene3D" id="1.10.287.1480">
    <property type="match status" value="1"/>
</dbReference>
<dbReference type="HAMAP" id="MF_00537">
    <property type="entry name" value="Ribosomal_uS14_1"/>
    <property type="match status" value="1"/>
</dbReference>
<dbReference type="InterPro" id="IPR001209">
    <property type="entry name" value="Ribosomal_uS14"/>
</dbReference>
<dbReference type="InterPro" id="IPR023036">
    <property type="entry name" value="Ribosomal_uS14_bac/plastid"/>
</dbReference>
<dbReference type="NCBIfam" id="NF006477">
    <property type="entry name" value="PRK08881.1"/>
    <property type="match status" value="1"/>
</dbReference>
<dbReference type="PANTHER" id="PTHR19836">
    <property type="entry name" value="30S RIBOSOMAL PROTEIN S14"/>
    <property type="match status" value="1"/>
</dbReference>
<dbReference type="PANTHER" id="PTHR19836:SF19">
    <property type="entry name" value="SMALL RIBOSOMAL SUBUNIT PROTEIN US14M"/>
    <property type="match status" value="1"/>
</dbReference>
<dbReference type="Pfam" id="PF00253">
    <property type="entry name" value="Ribosomal_S14"/>
    <property type="match status" value="1"/>
</dbReference>
<dbReference type="SUPFAM" id="SSF57716">
    <property type="entry name" value="Glucocorticoid receptor-like (DNA-binding domain)"/>
    <property type="match status" value="1"/>
</dbReference>
<proteinExistence type="inferred from homology"/>
<accession>A4VHP3</accession>
<reference key="1">
    <citation type="journal article" date="2008" name="Proc. Natl. Acad. Sci. U.S.A.">
        <title>Nitrogen fixation island and rhizosphere competence traits in the genome of root-associated Pseudomonas stutzeri A1501.</title>
        <authorList>
            <person name="Yan Y."/>
            <person name="Yang J."/>
            <person name="Dou Y."/>
            <person name="Chen M."/>
            <person name="Ping S."/>
            <person name="Peng J."/>
            <person name="Lu W."/>
            <person name="Zhang W."/>
            <person name="Yao Z."/>
            <person name="Li H."/>
            <person name="Liu W."/>
            <person name="He S."/>
            <person name="Geng L."/>
            <person name="Zhang X."/>
            <person name="Yang F."/>
            <person name="Yu H."/>
            <person name="Zhan Y."/>
            <person name="Li D."/>
            <person name="Lin Z."/>
            <person name="Wang Y."/>
            <person name="Elmerich C."/>
            <person name="Lin M."/>
            <person name="Jin Q."/>
        </authorList>
    </citation>
    <scope>NUCLEOTIDE SEQUENCE [LARGE SCALE GENOMIC DNA]</scope>
    <source>
        <strain>A1501</strain>
    </source>
</reference>
<gene>
    <name evidence="1" type="primary">rpsN</name>
    <name type="ordered locus">PST_0797</name>
</gene>
<feature type="chain" id="PRO_1000128523" description="Small ribosomal subunit protein uS14">
    <location>
        <begin position="1"/>
        <end position="101"/>
    </location>
</feature>